<protein>
    <recommendedName>
        <fullName evidence="1">Urease accessory protein UreE</fullName>
    </recommendedName>
</protein>
<comment type="function">
    <text evidence="1">Involved in urease metallocenter assembly. Binds nickel. Probably functions as a nickel donor during metallocenter assembly.</text>
</comment>
<comment type="subcellular location">
    <subcellularLocation>
        <location evidence="1">Cytoplasm</location>
    </subcellularLocation>
</comment>
<comment type="similarity">
    <text evidence="1">Belongs to the UreE family.</text>
</comment>
<dbReference type="EMBL" id="CP000546">
    <property type="protein sequence ID" value="ABN03826.1"/>
    <property type="molecule type" value="Genomic_DNA"/>
</dbReference>
<dbReference type="RefSeq" id="WP_011832330.1">
    <property type="nucleotide sequence ID" value="NC_008836.1"/>
</dbReference>
<dbReference type="SMR" id="A2S995"/>
<dbReference type="KEGG" id="bml:BMA10229_A2556"/>
<dbReference type="HOGENOM" id="CLU_093757_0_0_4"/>
<dbReference type="Proteomes" id="UP000002283">
    <property type="component" value="Chromosome I"/>
</dbReference>
<dbReference type="GO" id="GO:0005737">
    <property type="term" value="C:cytoplasm"/>
    <property type="evidence" value="ECO:0007669"/>
    <property type="project" value="UniProtKB-SubCell"/>
</dbReference>
<dbReference type="GO" id="GO:0016151">
    <property type="term" value="F:nickel cation binding"/>
    <property type="evidence" value="ECO:0007669"/>
    <property type="project" value="UniProtKB-UniRule"/>
</dbReference>
<dbReference type="GO" id="GO:0051082">
    <property type="term" value="F:unfolded protein binding"/>
    <property type="evidence" value="ECO:0007669"/>
    <property type="project" value="UniProtKB-UniRule"/>
</dbReference>
<dbReference type="GO" id="GO:0006457">
    <property type="term" value="P:protein folding"/>
    <property type="evidence" value="ECO:0007669"/>
    <property type="project" value="InterPro"/>
</dbReference>
<dbReference type="GO" id="GO:0065003">
    <property type="term" value="P:protein-containing complex assembly"/>
    <property type="evidence" value="ECO:0007669"/>
    <property type="project" value="InterPro"/>
</dbReference>
<dbReference type="GO" id="GO:0019627">
    <property type="term" value="P:urea metabolic process"/>
    <property type="evidence" value="ECO:0007669"/>
    <property type="project" value="InterPro"/>
</dbReference>
<dbReference type="CDD" id="cd00571">
    <property type="entry name" value="UreE"/>
    <property type="match status" value="1"/>
</dbReference>
<dbReference type="Gene3D" id="2.60.260.20">
    <property type="entry name" value="Urease metallochaperone UreE, N-terminal domain"/>
    <property type="match status" value="1"/>
</dbReference>
<dbReference type="Gene3D" id="3.30.70.790">
    <property type="entry name" value="UreE, C-terminal domain"/>
    <property type="match status" value="1"/>
</dbReference>
<dbReference type="HAMAP" id="MF_00822">
    <property type="entry name" value="UreE"/>
    <property type="match status" value="1"/>
</dbReference>
<dbReference type="InterPro" id="IPR012406">
    <property type="entry name" value="UreE"/>
</dbReference>
<dbReference type="InterPro" id="IPR007864">
    <property type="entry name" value="UreE_C_dom"/>
</dbReference>
<dbReference type="InterPro" id="IPR004029">
    <property type="entry name" value="UreE_N"/>
</dbReference>
<dbReference type="InterPro" id="IPR036118">
    <property type="entry name" value="UreE_N_sf"/>
</dbReference>
<dbReference type="NCBIfam" id="NF009751">
    <property type="entry name" value="PRK13261.1-1"/>
    <property type="match status" value="1"/>
</dbReference>
<dbReference type="NCBIfam" id="NF009762">
    <property type="entry name" value="PRK13263.1"/>
    <property type="match status" value="1"/>
</dbReference>
<dbReference type="Pfam" id="PF05194">
    <property type="entry name" value="UreE_C"/>
    <property type="match status" value="1"/>
</dbReference>
<dbReference type="Pfam" id="PF02814">
    <property type="entry name" value="UreE_N"/>
    <property type="match status" value="1"/>
</dbReference>
<dbReference type="SMART" id="SM00988">
    <property type="entry name" value="UreE_N"/>
    <property type="match status" value="1"/>
</dbReference>
<dbReference type="SUPFAM" id="SSF69737">
    <property type="entry name" value="Urease metallochaperone UreE, C-terminal domain"/>
    <property type="match status" value="1"/>
</dbReference>
<dbReference type="SUPFAM" id="SSF69287">
    <property type="entry name" value="Urease metallochaperone UreE, N-terminal domain"/>
    <property type="match status" value="1"/>
</dbReference>
<reference key="1">
    <citation type="journal article" date="2010" name="Genome Biol. Evol.">
        <title>Continuing evolution of Burkholderia mallei through genome reduction and large-scale rearrangements.</title>
        <authorList>
            <person name="Losada L."/>
            <person name="Ronning C.M."/>
            <person name="DeShazer D."/>
            <person name="Woods D."/>
            <person name="Fedorova N."/>
            <person name="Kim H.S."/>
            <person name="Shabalina S.A."/>
            <person name="Pearson T.R."/>
            <person name="Brinkac L."/>
            <person name="Tan P."/>
            <person name="Nandi T."/>
            <person name="Crabtree J."/>
            <person name="Badger J."/>
            <person name="Beckstrom-Sternberg S."/>
            <person name="Saqib M."/>
            <person name="Schutzer S.E."/>
            <person name="Keim P."/>
            <person name="Nierman W.C."/>
        </authorList>
    </citation>
    <scope>NUCLEOTIDE SEQUENCE [LARGE SCALE GENOMIC DNA]</scope>
    <source>
        <strain>NCTC 10229</strain>
    </source>
</reference>
<proteinExistence type="inferred from homology"/>
<name>UREE_BURM9</name>
<sequence>MRTIDKRIAPNVRLAATLVARAPALTLAYDARCKSRLAATLDTGEDVALVLPRGTVLRDGDVLVADDGALVRVAAAHEAVLLVRAPDALTLTRAAYHLGNRHTPVEVGAGCLKLEYDPALADMLTRLGATVERASAPFQPEAGAYGGGHRHGHDATFAEDYALAQQVFDEHHGHSHSHSHSHSHDHDHDHDHDHDHDHQHGPSCSHGHHHGHR</sequence>
<evidence type="ECO:0000255" key="1">
    <source>
        <dbReference type="HAMAP-Rule" id="MF_00822"/>
    </source>
</evidence>
<evidence type="ECO:0000256" key="2">
    <source>
        <dbReference type="SAM" id="MobiDB-lite"/>
    </source>
</evidence>
<feature type="chain" id="PRO_1000083878" description="Urease accessory protein UreE">
    <location>
        <begin position="1"/>
        <end position="213"/>
    </location>
</feature>
<feature type="region of interest" description="Disordered" evidence="2">
    <location>
        <begin position="170"/>
        <end position="213"/>
    </location>
</feature>
<feature type="compositionally biased region" description="Basic and acidic residues" evidence="2">
    <location>
        <begin position="182"/>
        <end position="200"/>
    </location>
</feature>
<organism>
    <name type="scientific">Burkholderia mallei (strain NCTC 10229)</name>
    <dbReference type="NCBI Taxonomy" id="412022"/>
    <lineage>
        <taxon>Bacteria</taxon>
        <taxon>Pseudomonadati</taxon>
        <taxon>Pseudomonadota</taxon>
        <taxon>Betaproteobacteria</taxon>
        <taxon>Burkholderiales</taxon>
        <taxon>Burkholderiaceae</taxon>
        <taxon>Burkholderia</taxon>
        <taxon>pseudomallei group</taxon>
    </lineage>
</organism>
<gene>
    <name evidence="1" type="primary">ureE</name>
    <name type="ordered locus">BMA10229_A2556</name>
</gene>
<keyword id="KW-0143">Chaperone</keyword>
<keyword id="KW-0963">Cytoplasm</keyword>
<keyword id="KW-0533">Nickel</keyword>
<keyword id="KW-0996">Nickel insertion</keyword>
<accession>A2S995</accession>